<proteinExistence type="inferred from homology"/>
<keyword id="KW-0548">Nucleotidyltransferase</keyword>
<keyword id="KW-0694">RNA-binding</keyword>
<keyword id="KW-0698">rRNA processing</keyword>
<keyword id="KW-0808">Transferase</keyword>
<keyword id="KW-0819">tRNA processing</keyword>
<keyword id="KW-0820">tRNA-binding</keyword>
<sequence length="259" mass="27351">MSKREDGRLDHELRPVIITRGFTENPAGSVLIEFGHTKVLCTASVTEGVPRWRKATGLGWLTAEYAMLPSATHSRSDRESVRGRLSGRTQEISRLIGRSLRACIDLAALGENTIAIDCDVLQADGGTRTAAITGAYVALADAVTYLSAAGKLSDPRPLSCAIAAVSVGVVDGRIRVDLPYEEDSRAEVDMNVVATDTGTLVEIQGTGEGATFARSTLDKLLDMALGACDTLFAAQRDALALPYPGVLPQGPPPPKAFGT</sequence>
<evidence type="ECO:0000255" key="1">
    <source>
        <dbReference type="HAMAP-Rule" id="MF_00564"/>
    </source>
</evidence>
<accession>C1AMY5</accession>
<protein>
    <recommendedName>
        <fullName evidence="1">Ribonuclease PH</fullName>
        <shortName evidence="1">RNase PH</shortName>
        <ecNumber evidence="1">2.7.7.56</ecNumber>
    </recommendedName>
    <alternativeName>
        <fullName evidence="1">tRNA nucleotidyltransferase</fullName>
    </alternativeName>
</protein>
<comment type="function">
    <text evidence="1">Phosphorolytic 3'-5' exoribonuclease that plays an important role in tRNA 3'-end maturation. Removes nucleotide residues following the 3'-CCA terminus of tRNAs; can also add nucleotides to the ends of RNA molecules by using nucleoside diphosphates as substrates, but this may not be physiologically important. Probably plays a role in initiation of 16S rRNA degradation (leading to ribosome degradation) during starvation.</text>
</comment>
<comment type="catalytic activity">
    <reaction evidence="1">
        <text>tRNA(n+1) + phosphate = tRNA(n) + a ribonucleoside 5'-diphosphate</text>
        <dbReference type="Rhea" id="RHEA:10628"/>
        <dbReference type="Rhea" id="RHEA-COMP:17343"/>
        <dbReference type="Rhea" id="RHEA-COMP:17344"/>
        <dbReference type="ChEBI" id="CHEBI:43474"/>
        <dbReference type="ChEBI" id="CHEBI:57930"/>
        <dbReference type="ChEBI" id="CHEBI:173114"/>
        <dbReference type="EC" id="2.7.7.56"/>
    </reaction>
</comment>
<comment type="subunit">
    <text evidence="1">Homohexameric ring arranged as a trimer of dimers.</text>
</comment>
<comment type="similarity">
    <text evidence="1">Belongs to the RNase PH family.</text>
</comment>
<organism>
    <name type="scientific">Mycobacterium bovis (strain BCG / Tokyo 172 / ATCC 35737 / TMC 1019)</name>
    <dbReference type="NCBI Taxonomy" id="561275"/>
    <lineage>
        <taxon>Bacteria</taxon>
        <taxon>Bacillati</taxon>
        <taxon>Actinomycetota</taxon>
        <taxon>Actinomycetes</taxon>
        <taxon>Mycobacteriales</taxon>
        <taxon>Mycobacteriaceae</taxon>
        <taxon>Mycobacterium</taxon>
        <taxon>Mycobacterium tuberculosis complex</taxon>
    </lineage>
</organism>
<dbReference type="EC" id="2.7.7.56" evidence="1"/>
<dbReference type="EMBL" id="AP010918">
    <property type="protein sequence ID" value="BAH25664.1"/>
    <property type="molecule type" value="Genomic_DNA"/>
</dbReference>
<dbReference type="RefSeq" id="WP_003406926.1">
    <property type="nucleotide sequence ID" value="NZ_CP014566.1"/>
</dbReference>
<dbReference type="SMR" id="C1AMY5"/>
<dbReference type="KEGG" id="mbt:JTY_1376"/>
<dbReference type="HOGENOM" id="CLU_050858_0_0_11"/>
<dbReference type="GO" id="GO:0000175">
    <property type="term" value="F:3'-5'-RNA exonuclease activity"/>
    <property type="evidence" value="ECO:0007669"/>
    <property type="project" value="UniProtKB-UniRule"/>
</dbReference>
<dbReference type="GO" id="GO:0000049">
    <property type="term" value="F:tRNA binding"/>
    <property type="evidence" value="ECO:0007669"/>
    <property type="project" value="UniProtKB-UniRule"/>
</dbReference>
<dbReference type="GO" id="GO:0009022">
    <property type="term" value="F:tRNA nucleotidyltransferase activity"/>
    <property type="evidence" value="ECO:0007669"/>
    <property type="project" value="UniProtKB-UniRule"/>
</dbReference>
<dbReference type="GO" id="GO:0016075">
    <property type="term" value="P:rRNA catabolic process"/>
    <property type="evidence" value="ECO:0007669"/>
    <property type="project" value="UniProtKB-UniRule"/>
</dbReference>
<dbReference type="GO" id="GO:0006364">
    <property type="term" value="P:rRNA processing"/>
    <property type="evidence" value="ECO:0007669"/>
    <property type="project" value="UniProtKB-KW"/>
</dbReference>
<dbReference type="GO" id="GO:0008033">
    <property type="term" value="P:tRNA processing"/>
    <property type="evidence" value="ECO:0007669"/>
    <property type="project" value="UniProtKB-UniRule"/>
</dbReference>
<dbReference type="CDD" id="cd11362">
    <property type="entry name" value="RNase_PH_bact"/>
    <property type="match status" value="1"/>
</dbReference>
<dbReference type="FunFam" id="3.30.230.70:FF:000003">
    <property type="entry name" value="Ribonuclease PH"/>
    <property type="match status" value="1"/>
</dbReference>
<dbReference type="Gene3D" id="3.30.230.70">
    <property type="entry name" value="GHMP Kinase, N-terminal domain"/>
    <property type="match status" value="1"/>
</dbReference>
<dbReference type="HAMAP" id="MF_00564">
    <property type="entry name" value="RNase_PH"/>
    <property type="match status" value="1"/>
</dbReference>
<dbReference type="InterPro" id="IPR001247">
    <property type="entry name" value="ExoRNase_PH_dom1"/>
</dbReference>
<dbReference type="InterPro" id="IPR015847">
    <property type="entry name" value="ExoRNase_PH_dom2"/>
</dbReference>
<dbReference type="InterPro" id="IPR036345">
    <property type="entry name" value="ExoRNase_PH_dom2_sf"/>
</dbReference>
<dbReference type="InterPro" id="IPR027408">
    <property type="entry name" value="PNPase/RNase_PH_dom_sf"/>
</dbReference>
<dbReference type="InterPro" id="IPR020568">
    <property type="entry name" value="Ribosomal_Su5_D2-typ_SF"/>
</dbReference>
<dbReference type="InterPro" id="IPR050080">
    <property type="entry name" value="RNase_PH"/>
</dbReference>
<dbReference type="InterPro" id="IPR002381">
    <property type="entry name" value="RNase_PH_bac-type"/>
</dbReference>
<dbReference type="InterPro" id="IPR018336">
    <property type="entry name" value="RNase_PH_CS"/>
</dbReference>
<dbReference type="NCBIfam" id="TIGR01966">
    <property type="entry name" value="RNasePH"/>
    <property type="match status" value="1"/>
</dbReference>
<dbReference type="PANTHER" id="PTHR11953">
    <property type="entry name" value="EXOSOME COMPLEX COMPONENT"/>
    <property type="match status" value="1"/>
</dbReference>
<dbReference type="PANTHER" id="PTHR11953:SF0">
    <property type="entry name" value="EXOSOME COMPLEX COMPONENT RRP41"/>
    <property type="match status" value="1"/>
</dbReference>
<dbReference type="Pfam" id="PF01138">
    <property type="entry name" value="RNase_PH"/>
    <property type="match status" value="1"/>
</dbReference>
<dbReference type="Pfam" id="PF03725">
    <property type="entry name" value="RNase_PH_C"/>
    <property type="match status" value="1"/>
</dbReference>
<dbReference type="SUPFAM" id="SSF55666">
    <property type="entry name" value="Ribonuclease PH domain 2-like"/>
    <property type="match status" value="1"/>
</dbReference>
<dbReference type="SUPFAM" id="SSF54211">
    <property type="entry name" value="Ribosomal protein S5 domain 2-like"/>
    <property type="match status" value="1"/>
</dbReference>
<dbReference type="PROSITE" id="PS01277">
    <property type="entry name" value="RIBONUCLEASE_PH"/>
    <property type="match status" value="1"/>
</dbReference>
<feature type="chain" id="PRO_1000146782" description="Ribonuclease PH">
    <location>
        <begin position="1"/>
        <end position="259"/>
    </location>
</feature>
<feature type="binding site" evidence="1">
    <location>
        <position position="88"/>
    </location>
    <ligand>
        <name>phosphate</name>
        <dbReference type="ChEBI" id="CHEBI:43474"/>
        <note>substrate</note>
    </ligand>
</feature>
<feature type="binding site" evidence="1">
    <location>
        <begin position="126"/>
        <end position="128"/>
    </location>
    <ligand>
        <name>phosphate</name>
        <dbReference type="ChEBI" id="CHEBI:43474"/>
        <note>substrate</note>
    </ligand>
</feature>
<gene>
    <name evidence="1" type="primary">rph</name>
    <name type="ordered locus">JTY_1376</name>
</gene>
<reference key="1">
    <citation type="journal article" date="2009" name="Vaccine">
        <title>Whole genome sequence analysis of Mycobacterium bovis bacillus Calmette-Guerin (BCG) Tokyo 172: a comparative study of BCG vaccine substrains.</title>
        <authorList>
            <person name="Seki M."/>
            <person name="Honda I."/>
            <person name="Fujita I."/>
            <person name="Yano I."/>
            <person name="Yamamoto S."/>
            <person name="Koyama A."/>
        </authorList>
    </citation>
    <scope>NUCLEOTIDE SEQUENCE [LARGE SCALE GENOMIC DNA]</scope>
    <source>
        <strain>BCG / Tokyo 172 / ATCC 35737 / TMC 1019</strain>
    </source>
</reference>
<name>RNPH_MYCBT</name>